<feature type="chain" id="PRO_0000064549" description="Antilisterial bacteriocin subtilosin biosynthesis protein AlbG">
    <location>
        <begin position="1"/>
        <end position="233"/>
    </location>
</feature>
<feature type="transmembrane region" description="Helical" evidence="2">
    <location>
        <begin position="4"/>
        <end position="24"/>
    </location>
</feature>
<feature type="transmembrane region" description="Helical" evidence="2">
    <location>
        <begin position="46"/>
        <end position="66"/>
    </location>
</feature>
<feature type="transmembrane region" description="Helical" evidence="2">
    <location>
        <begin position="116"/>
        <end position="136"/>
    </location>
</feature>
<feature type="transmembrane region" description="Helical" evidence="2">
    <location>
        <begin position="145"/>
        <end position="165"/>
    </location>
</feature>
<feature type="transmembrane region" description="Helical" evidence="2">
    <location>
        <begin position="192"/>
        <end position="212"/>
    </location>
</feature>
<organism>
    <name type="scientific">Bacillus subtilis</name>
    <dbReference type="NCBI Taxonomy" id="1423"/>
    <lineage>
        <taxon>Bacteria</taxon>
        <taxon>Bacillati</taxon>
        <taxon>Bacillota</taxon>
        <taxon>Bacilli</taxon>
        <taxon>Bacillales</taxon>
        <taxon>Bacillaceae</taxon>
        <taxon>Bacillus</taxon>
    </lineage>
</organism>
<dbReference type="EMBL" id="AJ430547">
    <property type="protein sequence ID" value="CAD23205.1"/>
    <property type="molecule type" value="Genomic_DNA"/>
</dbReference>
<dbReference type="SMR" id="Q8RKH1"/>
<dbReference type="STRING" id="483913.AN935_18945"/>
<dbReference type="PATRIC" id="fig|1423.172.peg.2478"/>
<dbReference type="GO" id="GO:0005886">
    <property type="term" value="C:plasma membrane"/>
    <property type="evidence" value="ECO:0007669"/>
    <property type="project" value="UniProtKB-SubCell"/>
</dbReference>
<dbReference type="GO" id="GO:0030152">
    <property type="term" value="P:bacteriocin biosynthetic process"/>
    <property type="evidence" value="ECO:0007669"/>
    <property type="project" value="UniProtKB-KW"/>
</dbReference>
<evidence type="ECO:0000250" key="1"/>
<evidence type="ECO:0000255" key="2"/>
<evidence type="ECO:0000305" key="3"/>
<protein>
    <recommendedName>
        <fullName>Antilisterial bacteriocin subtilosin biosynthesis protein AlbG</fullName>
    </recommendedName>
</protein>
<sequence length="233" mass="26383">MSKSTVFTVLLLLLGMAAYSFGWVQAVAEAAAQYVQIFNNDALRLGLLACIAAVLMLPAFLYLHYVTQSVKNMTAAFQKLTQSHQSCCDFQHHRLCSRYAEEVKSLRDRYKNVRQTYVMAAVLCQVIIFGCMFEIVKAVPFRLHTPPIVSTGMALLLILYLLFYMRMYLLKLFQHGTLFKKILACVLTGAGIGWMLSFTISELLFLIILAAIQQIGSFIYKRFSNRGFTSLDL</sequence>
<proteinExistence type="inferred from homology"/>
<comment type="function">
    <text evidence="1">Involved in the production of the bacteriocin subtilosin.</text>
</comment>
<comment type="subcellular location">
    <subcellularLocation>
        <location evidence="3">Cell membrane</location>
        <topology evidence="3">Multi-pass membrane protein</topology>
    </subcellularLocation>
</comment>
<name>ALBG_BACIU</name>
<accession>Q8RKH1</accession>
<keyword id="KW-0045">Antibiotic biosynthesis</keyword>
<keyword id="KW-0871">Bacteriocin biosynthesis</keyword>
<keyword id="KW-1003">Cell membrane</keyword>
<keyword id="KW-0472">Membrane</keyword>
<keyword id="KW-0812">Transmembrane</keyword>
<keyword id="KW-1133">Transmembrane helix</keyword>
<reference key="1">
    <citation type="submission" date="2002-02" db="EMBL/GenBank/DDBJ databases">
        <title>Subtilosin A biosynthesis is conserved among two different classes of Bacillus subtilis strains.</title>
        <authorList>
            <person name="Stein T."/>
            <person name="Duesterhus S."/>
            <person name="Entian K.-D."/>
        </authorList>
    </citation>
    <scope>NUCLEOTIDE SEQUENCE [GENOMIC DNA]</scope>
    <source>
        <strain>ATCC 6633 / PCI 219 / NRS 231</strain>
    </source>
</reference>
<gene>
    <name type="primary">albG</name>
</gene>